<feature type="chain" id="PRO_1000202729" description="Sugar fermentation stimulation protein homolog">
    <location>
        <begin position="1"/>
        <end position="240"/>
    </location>
</feature>
<accession>C3MTF2</accession>
<organism>
    <name type="scientific">Saccharolobus islandicus (strain M.14.25 / Kamchatka #1)</name>
    <name type="common">Sulfolobus islandicus</name>
    <dbReference type="NCBI Taxonomy" id="427317"/>
    <lineage>
        <taxon>Archaea</taxon>
        <taxon>Thermoproteota</taxon>
        <taxon>Thermoprotei</taxon>
        <taxon>Sulfolobales</taxon>
        <taxon>Sulfolobaceae</taxon>
        <taxon>Saccharolobus</taxon>
    </lineage>
</organism>
<evidence type="ECO:0000255" key="1">
    <source>
        <dbReference type="HAMAP-Rule" id="MF_00095"/>
    </source>
</evidence>
<reference key="1">
    <citation type="journal article" date="2009" name="Proc. Natl. Acad. Sci. U.S.A.">
        <title>Biogeography of the Sulfolobus islandicus pan-genome.</title>
        <authorList>
            <person name="Reno M.L."/>
            <person name="Held N.L."/>
            <person name="Fields C.J."/>
            <person name="Burke P.V."/>
            <person name="Whitaker R.J."/>
        </authorList>
    </citation>
    <scope>NUCLEOTIDE SEQUENCE [LARGE SCALE GENOMIC DNA]</scope>
    <source>
        <strain>M.14.25 / Kamchatka #1</strain>
    </source>
</reference>
<dbReference type="EMBL" id="CP001400">
    <property type="protein sequence ID" value="ACP39445.1"/>
    <property type="molecule type" value="Genomic_DNA"/>
</dbReference>
<dbReference type="RefSeq" id="WP_012712648.1">
    <property type="nucleotide sequence ID" value="NC_012588.1"/>
</dbReference>
<dbReference type="SMR" id="C3MTF2"/>
<dbReference type="GeneID" id="7794871"/>
<dbReference type="KEGG" id="sia:M1425_2738"/>
<dbReference type="HOGENOM" id="CLU_052299_1_0_2"/>
<dbReference type="Proteomes" id="UP000001350">
    <property type="component" value="Chromosome"/>
</dbReference>
<dbReference type="GO" id="GO:0003677">
    <property type="term" value="F:DNA binding"/>
    <property type="evidence" value="ECO:0007669"/>
    <property type="project" value="InterPro"/>
</dbReference>
<dbReference type="CDD" id="cd22357">
    <property type="entry name" value="SfsA-like"/>
    <property type="match status" value="1"/>
</dbReference>
<dbReference type="Gene3D" id="2.40.50.580">
    <property type="match status" value="1"/>
</dbReference>
<dbReference type="Gene3D" id="3.40.1350.60">
    <property type="match status" value="1"/>
</dbReference>
<dbReference type="HAMAP" id="MF_00095">
    <property type="entry name" value="SfsA"/>
    <property type="match status" value="1"/>
</dbReference>
<dbReference type="InterPro" id="IPR005224">
    <property type="entry name" value="SfsA"/>
</dbReference>
<dbReference type="InterPro" id="IPR040452">
    <property type="entry name" value="SfsA_C"/>
</dbReference>
<dbReference type="InterPro" id="IPR041465">
    <property type="entry name" value="SfsA_N"/>
</dbReference>
<dbReference type="NCBIfam" id="TIGR00230">
    <property type="entry name" value="sfsA"/>
    <property type="match status" value="1"/>
</dbReference>
<dbReference type="PANTHER" id="PTHR30545">
    <property type="entry name" value="SUGAR FERMENTATION STIMULATION PROTEIN A"/>
    <property type="match status" value="1"/>
</dbReference>
<dbReference type="PANTHER" id="PTHR30545:SF2">
    <property type="entry name" value="SUGAR FERMENTATION STIMULATION PROTEIN A"/>
    <property type="match status" value="1"/>
</dbReference>
<dbReference type="Pfam" id="PF03749">
    <property type="entry name" value="SfsA"/>
    <property type="match status" value="1"/>
</dbReference>
<dbReference type="Pfam" id="PF17746">
    <property type="entry name" value="SfsA_N"/>
    <property type="match status" value="1"/>
</dbReference>
<name>SFSA_SACI4</name>
<sequence>MKERDSRNQIGDLPFRVKEGFSVYEFIEQLYEANVVERINRFLVKVTFNGKEFLAHLHDPGRLKDLIYPGNLVLIRETKGYKTKFSITAAYSNSRFVVLDSRLHNIIASKFLPEAYEKEIKVGNSRIDFKYDNTYLEVKGCTLVENEIAYFPDAPTERGRTHLKELRELMKKGFNAILLILVMRDDAKCFLPNEKTDPKFSIEFWNSIKEGLNVNIKTFKLVGNKIIYVRDIPLCKTNLT</sequence>
<protein>
    <recommendedName>
        <fullName evidence="1">Sugar fermentation stimulation protein homolog</fullName>
    </recommendedName>
</protein>
<comment type="similarity">
    <text evidence="1">Belongs to the SfsA family.</text>
</comment>
<gene>
    <name evidence="1" type="primary">sfsA</name>
    <name type="ordered locus">M1425_2738</name>
</gene>
<proteinExistence type="inferred from homology"/>